<feature type="chain" id="PRO_1000133520" description="Small ribosomal subunit protein bS6">
    <location>
        <begin position="1"/>
        <end position="95"/>
    </location>
</feature>
<dbReference type="EMBL" id="AP009049">
    <property type="protein sequence ID" value="BAH08503.1"/>
    <property type="molecule type" value="Genomic_DNA"/>
</dbReference>
<dbReference type="RefSeq" id="WP_012104223.1">
    <property type="nucleotide sequence ID" value="NC_011837.1"/>
</dbReference>
<dbReference type="SMR" id="B9DXR0"/>
<dbReference type="KEGG" id="ckr:CKR_3452"/>
<dbReference type="HOGENOM" id="CLU_113441_5_1_9"/>
<dbReference type="Proteomes" id="UP000007969">
    <property type="component" value="Chromosome"/>
</dbReference>
<dbReference type="GO" id="GO:0005737">
    <property type="term" value="C:cytoplasm"/>
    <property type="evidence" value="ECO:0007669"/>
    <property type="project" value="UniProtKB-ARBA"/>
</dbReference>
<dbReference type="GO" id="GO:1990904">
    <property type="term" value="C:ribonucleoprotein complex"/>
    <property type="evidence" value="ECO:0007669"/>
    <property type="project" value="UniProtKB-KW"/>
</dbReference>
<dbReference type="GO" id="GO:0005840">
    <property type="term" value="C:ribosome"/>
    <property type="evidence" value="ECO:0007669"/>
    <property type="project" value="UniProtKB-KW"/>
</dbReference>
<dbReference type="GO" id="GO:0070181">
    <property type="term" value="F:small ribosomal subunit rRNA binding"/>
    <property type="evidence" value="ECO:0007669"/>
    <property type="project" value="TreeGrafter"/>
</dbReference>
<dbReference type="GO" id="GO:0003735">
    <property type="term" value="F:structural constituent of ribosome"/>
    <property type="evidence" value="ECO:0007669"/>
    <property type="project" value="InterPro"/>
</dbReference>
<dbReference type="GO" id="GO:0006412">
    <property type="term" value="P:translation"/>
    <property type="evidence" value="ECO:0007669"/>
    <property type="project" value="UniProtKB-UniRule"/>
</dbReference>
<dbReference type="CDD" id="cd00473">
    <property type="entry name" value="bS6"/>
    <property type="match status" value="1"/>
</dbReference>
<dbReference type="FunFam" id="3.30.70.60:FF:000002">
    <property type="entry name" value="30S ribosomal protein S6"/>
    <property type="match status" value="1"/>
</dbReference>
<dbReference type="Gene3D" id="3.30.70.60">
    <property type="match status" value="1"/>
</dbReference>
<dbReference type="HAMAP" id="MF_00360">
    <property type="entry name" value="Ribosomal_bS6"/>
    <property type="match status" value="1"/>
</dbReference>
<dbReference type="InterPro" id="IPR000529">
    <property type="entry name" value="Ribosomal_bS6"/>
</dbReference>
<dbReference type="InterPro" id="IPR035980">
    <property type="entry name" value="Ribosomal_bS6_sf"/>
</dbReference>
<dbReference type="InterPro" id="IPR020814">
    <property type="entry name" value="Ribosomal_S6_plastid/chlpt"/>
</dbReference>
<dbReference type="InterPro" id="IPR014717">
    <property type="entry name" value="Transl_elong_EF1B/ribsomal_bS6"/>
</dbReference>
<dbReference type="NCBIfam" id="TIGR00166">
    <property type="entry name" value="S6"/>
    <property type="match status" value="1"/>
</dbReference>
<dbReference type="PANTHER" id="PTHR21011">
    <property type="entry name" value="MITOCHONDRIAL 28S RIBOSOMAL PROTEIN S6"/>
    <property type="match status" value="1"/>
</dbReference>
<dbReference type="PANTHER" id="PTHR21011:SF1">
    <property type="entry name" value="SMALL RIBOSOMAL SUBUNIT PROTEIN BS6M"/>
    <property type="match status" value="1"/>
</dbReference>
<dbReference type="Pfam" id="PF01250">
    <property type="entry name" value="Ribosomal_S6"/>
    <property type="match status" value="1"/>
</dbReference>
<dbReference type="SUPFAM" id="SSF54995">
    <property type="entry name" value="Ribosomal protein S6"/>
    <property type="match status" value="1"/>
</dbReference>
<keyword id="KW-0687">Ribonucleoprotein</keyword>
<keyword id="KW-0689">Ribosomal protein</keyword>
<keyword id="KW-0694">RNA-binding</keyword>
<keyword id="KW-0699">rRNA-binding</keyword>
<organism>
    <name type="scientific">Clostridium kluyveri (strain NBRC 12016)</name>
    <dbReference type="NCBI Taxonomy" id="583346"/>
    <lineage>
        <taxon>Bacteria</taxon>
        <taxon>Bacillati</taxon>
        <taxon>Bacillota</taxon>
        <taxon>Clostridia</taxon>
        <taxon>Eubacteriales</taxon>
        <taxon>Clostridiaceae</taxon>
        <taxon>Clostridium</taxon>
    </lineage>
</organism>
<gene>
    <name evidence="1" type="primary">rpsF</name>
    <name type="ordered locus">CKR_3452</name>
</gene>
<sequence>MGKYETIFILHPSLDEEGYKANVEKFKGVIENGGGVIENVDIWGKRKLAYEIKKVNEGYYTLITFNADPTLPKELDRVFRITDTVVRHIIVKDEK</sequence>
<proteinExistence type="inferred from homology"/>
<name>RS6_CLOK1</name>
<reference key="1">
    <citation type="submission" date="2005-09" db="EMBL/GenBank/DDBJ databases">
        <title>Complete genome sequence of Clostridium kluyveri and comparative genomics of Clostridia species.</title>
        <authorList>
            <person name="Inui M."/>
            <person name="Nonaka H."/>
            <person name="Shinoda Y."/>
            <person name="Ikenaga Y."/>
            <person name="Abe M."/>
            <person name="Naito K."/>
            <person name="Vertes A.A."/>
            <person name="Yukawa H."/>
        </authorList>
    </citation>
    <scope>NUCLEOTIDE SEQUENCE [LARGE SCALE GENOMIC DNA]</scope>
    <source>
        <strain>NBRC 12016</strain>
    </source>
</reference>
<comment type="function">
    <text evidence="1">Binds together with bS18 to 16S ribosomal RNA.</text>
</comment>
<comment type="similarity">
    <text evidence="1">Belongs to the bacterial ribosomal protein bS6 family.</text>
</comment>
<evidence type="ECO:0000255" key="1">
    <source>
        <dbReference type="HAMAP-Rule" id="MF_00360"/>
    </source>
</evidence>
<evidence type="ECO:0000305" key="2"/>
<accession>B9DXR0</accession>
<protein>
    <recommendedName>
        <fullName evidence="1">Small ribosomal subunit protein bS6</fullName>
    </recommendedName>
    <alternativeName>
        <fullName evidence="2">30S ribosomal protein S6</fullName>
    </alternativeName>
</protein>